<proteinExistence type="inferred from homology"/>
<keyword id="KW-0030">Aminoacyl-tRNA synthetase</keyword>
<keyword id="KW-0067">ATP-binding</keyword>
<keyword id="KW-0963">Cytoplasm</keyword>
<keyword id="KW-0436">Ligase</keyword>
<keyword id="KW-0460">Magnesium</keyword>
<keyword id="KW-0479">Metal-binding</keyword>
<keyword id="KW-0547">Nucleotide-binding</keyword>
<keyword id="KW-0648">Protein biosynthesis</keyword>
<gene>
    <name evidence="1" type="primary">pheS</name>
    <name type="ordered locus">TRQ2_0105</name>
</gene>
<reference key="1">
    <citation type="journal article" date="2011" name="J. Bacteriol.">
        <title>Genome sequence of Thermotoga sp. strain RQ2, a hyperthermophilic bacterium isolated from a geothermally heated region of the seafloor near Ribeira Quente, the Azores.</title>
        <authorList>
            <person name="Swithers K.S."/>
            <person name="DiPippo J.L."/>
            <person name="Bruce D.C."/>
            <person name="Detter C."/>
            <person name="Tapia R."/>
            <person name="Han S."/>
            <person name="Saunders E."/>
            <person name="Goodwin L.A."/>
            <person name="Han J."/>
            <person name="Woyke T."/>
            <person name="Pitluck S."/>
            <person name="Pennacchio L."/>
            <person name="Nolan M."/>
            <person name="Mikhailova N."/>
            <person name="Lykidis A."/>
            <person name="Land M.L."/>
            <person name="Brettin T."/>
            <person name="Stetter K.O."/>
            <person name="Nelson K.E."/>
            <person name="Gogarten J.P."/>
            <person name="Noll K.M."/>
        </authorList>
    </citation>
    <scope>NUCLEOTIDE SEQUENCE [LARGE SCALE GENOMIC DNA]</scope>
    <source>
        <strain>RQ2</strain>
    </source>
</reference>
<accession>B1LCK9</accession>
<comment type="catalytic activity">
    <reaction evidence="1">
        <text>tRNA(Phe) + L-phenylalanine + ATP = L-phenylalanyl-tRNA(Phe) + AMP + diphosphate + H(+)</text>
        <dbReference type="Rhea" id="RHEA:19413"/>
        <dbReference type="Rhea" id="RHEA-COMP:9668"/>
        <dbReference type="Rhea" id="RHEA-COMP:9699"/>
        <dbReference type="ChEBI" id="CHEBI:15378"/>
        <dbReference type="ChEBI" id="CHEBI:30616"/>
        <dbReference type="ChEBI" id="CHEBI:33019"/>
        <dbReference type="ChEBI" id="CHEBI:58095"/>
        <dbReference type="ChEBI" id="CHEBI:78442"/>
        <dbReference type="ChEBI" id="CHEBI:78531"/>
        <dbReference type="ChEBI" id="CHEBI:456215"/>
        <dbReference type="EC" id="6.1.1.20"/>
    </reaction>
</comment>
<comment type="cofactor">
    <cofactor evidence="1">
        <name>Mg(2+)</name>
        <dbReference type="ChEBI" id="CHEBI:18420"/>
    </cofactor>
    <text evidence="1">Binds 2 magnesium ions per tetramer.</text>
</comment>
<comment type="subunit">
    <text evidence="1">Tetramer of two alpha and two beta subunits.</text>
</comment>
<comment type="subcellular location">
    <subcellularLocation>
        <location evidence="1">Cytoplasm</location>
    </subcellularLocation>
</comment>
<comment type="similarity">
    <text evidence="1">Belongs to the class-II aminoacyl-tRNA synthetase family. Phe-tRNA synthetase alpha subunit type 1 subfamily.</text>
</comment>
<dbReference type="EC" id="6.1.1.20" evidence="1"/>
<dbReference type="EMBL" id="CP000969">
    <property type="protein sequence ID" value="ACB08467.1"/>
    <property type="molecule type" value="Genomic_DNA"/>
</dbReference>
<dbReference type="RefSeq" id="WP_004080838.1">
    <property type="nucleotide sequence ID" value="NC_010483.1"/>
</dbReference>
<dbReference type="SMR" id="B1LCK9"/>
<dbReference type="KEGG" id="trq:TRQ2_0105"/>
<dbReference type="HOGENOM" id="CLU_025086_0_1_0"/>
<dbReference type="Proteomes" id="UP000001687">
    <property type="component" value="Chromosome"/>
</dbReference>
<dbReference type="GO" id="GO:0005737">
    <property type="term" value="C:cytoplasm"/>
    <property type="evidence" value="ECO:0007669"/>
    <property type="project" value="UniProtKB-SubCell"/>
</dbReference>
<dbReference type="GO" id="GO:0005524">
    <property type="term" value="F:ATP binding"/>
    <property type="evidence" value="ECO:0007669"/>
    <property type="project" value="UniProtKB-UniRule"/>
</dbReference>
<dbReference type="GO" id="GO:0000287">
    <property type="term" value="F:magnesium ion binding"/>
    <property type="evidence" value="ECO:0007669"/>
    <property type="project" value="UniProtKB-UniRule"/>
</dbReference>
<dbReference type="GO" id="GO:0004826">
    <property type="term" value="F:phenylalanine-tRNA ligase activity"/>
    <property type="evidence" value="ECO:0007669"/>
    <property type="project" value="UniProtKB-UniRule"/>
</dbReference>
<dbReference type="GO" id="GO:0000049">
    <property type="term" value="F:tRNA binding"/>
    <property type="evidence" value="ECO:0007669"/>
    <property type="project" value="InterPro"/>
</dbReference>
<dbReference type="GO" id="GO:0006432">
    <property type="term" value="P:phenylalanyl-tRNA aminoacylation"/>
    <property type="evidence" value="ECO:0007669"/>
    <property type="project" value="UniProtKB-UniRule"/>
</dbReference>
<dbReference type="CDD" id="cd00496">
    <property type="entry name" value="PheRS_alpha_core"/>
    <property type="match status" value="1"/>
</dbReference>
<dbReference type="FunFam" id="3.30.930.10:FF:000003">
    <property type="entry name" value="Phenylalanine--tRNA ligase alpha subunit"/>
    <property type="match status" value="1"/>
</dbReference>
<dbReference type="Gene3D" id="3.30.930.10">
    <property type="entry name" value="Bira Bifunctional Protein, Domain 2"/>
    <property type="match status" value="1"/>
</dbReference>
<dbReference type="HAMAP" id="MF_00281">
    <property type="entry name" value="Phe_tRNA_synth_alpha1"/>
    <property type="match status" value="1"/>
</dbReference>
<dbReference type="InterPro" id="IPR006195">
    <property type="entry name" value="aa-tRNA-synth_II"/>
</dbReference>
<dbReference type="InterPro" id="IPR045864">
    <property type="entry name" value="aa-tRNA-synth_II/BPL/LPL"/>
</dbReference>
<dbReference type="InterPro" id="IPR004529">
    <property type="entry name" value="Phe-tRNA-synth_IIc_asu"/>
</dbReference>
<dbReference type="InterPro" id="IPR004188">
    <property type="entry name" value="Phe-tRNA_ligase_II_N"/>
</dbReference>
<dbReference type="InterPro" id="IPR022911">
    <property type="entry name" value="Phe_tRNA_ligase_alpha1_bac"/>
</dbReference>
<dbReference type="InterPro" id="IPR002319">
    <property type="entry name" value="Phenylalanyl-tRNA_Synthase"/>
</dbReference>
<dbReference type="InterPro" id="IPR010978">
    <property type="entry name" value="tRNA-bd_arm"/>
</dbReference>
<dbReference type="NCBIfam" id="TIGR00468">
    <property type="entry name" value="pheS"/>
    <property type="match status" value="1"/>
</dbReference>
<dbReference type="PANTHER" id="PTHR11538:SF41">
    <property type="entry name" value="PHENYLALANINE--TRNA LIGASE, MITOCHONDRIAL"/>
    <property type="match status" value="1"/>
</dbReference>
<dbReference type="PANTHER" id="PTHR11538">
    <property type="entry name" value="PHENYLALANYL-TRNA SYNTHETASE"/>
    <property type="match status" value="1"/>
</dbReference>
<dbReference type="Pfam" id="PF02912">
    <property type="entry name" value="Phe_tRNA-synt_N"/>
    <property type="match status" value="1"/>
</dbReference>
<dbReference type="Pfam" id="PF01409">
    <property type="entry name" value="tRNA-synt_2d"/>
    <property type="match status" value="1"/>
</dbReference>
<dbReference type="SUPFAM" id="SSF55681">
    <property type="entry name" value="Class II aaRS and biotin synthetases"/>
    <property type="match status" value="1"/>
</dbReference>
<dbReference type="SUPFAM" id="SSF46589">
    <property type="entry name" value="tRNA-binding arm"/>
    <property type="match status" value="1"/>
</dbReference>
<dbReference type="PROSITE" id="PS50862">
    <property type="entry name" value="AA_TRNA_LIGASE_II"/>
    <property type="match status" value="1"/>
</dbReference>
<evidence type="ECO:0000255" key="1">
    <source>
        <dbReference type="HAMAP-Rule" id="MF_00281"/>
    </source>
</evidence>
<protein>
    <recommendedName>
        <fullName evidence="1">Phenylalanine--tRNA ligase alpha subunit</fullName>
        <ecNumber evidence="1">6.1.1.20</ecNumber>
    </recommendedName>
    <alternativeName>
        <fullName evidence="1">Phenylalanyl-tRNA synthetase alpha subunit</fullName>
        <shortName evidence="1">PheRS</shortName>
    </alternativeName>
</protein>
<feature type="chain" id="PRO_1000114924" description="Phenylalanine--tRNA ligase alpha subunit">
    <location>
        <begin position="1"/>
        <end position="325"/>
    </location>
</feature>
<feature type="binding site" evidence="1">
    <location>
        <position position="251"/>
    </location>
    <ligand>
        <name>Mg(2+)</name>
        <dbReference type="ChEBI" id="CHEBI:18420"/>
        <note>shared with beta subunit</note>
    </ligand>
</feature>
<sequence length="325" mass="37875">MEIEAVEKEAIEKLSKISNVQELESFRIEFLGKKGKITGLMKNLKNLPPEERPAYGKRVNELREKIEKLFEEKRQQIQRILEQEKMEKMRIDVTVPGARRKLGHSHPVLKVMEEIERIFVSMGFDVVEGPEIETTWHNFDALNTPEWHPARDEHDSFYITDDLLLRTHTSPVQIRTMLERKPPIAIISPGKVYRRDYDATHLPMFHQVEGLHVDRDLSVAHLKFTLEEFARRMFGEGAKVRLRPSFFPFTEPSFEVDVYLSGYGWLEILGAGMVDPNVFLNVGYDPEEWTGYAFGMGVERIAMLKYGIADIREFVRNDVRFLSSY</sequence>
<organism>
    <name type="scientific">Thermotoga sp. (strain RQ2)</name>
    <dbReference type="NCBI Taxonomy" id="126740"/>
    <lineage>
        <taxon>Bacteria</taxon>
        <taxon>Thermotogati</taxon>
        <taxon>Thermotogota</taxon>
        <taxon>Thermotogae</taxon>
        <taxon>Thermotogales</taxon>
        <taxon>Thermotogaceae</taxon>
        <taxon>Thermotoga</taxon>
    </lineage>
</organism>
<name>SYFA_THESQ</name>